<organism>
    <name type="scientific">Ostreid herpesvirus 1 (isolate France)</name>
    <name type="common">OsHV-1</name>
    <name type="synonym">Pacific oyster herpesvirus</name>
    <dbReference type="NCBI Taxonomy" id="654903"/>
    <lineage>
        <taxon>Viruses</taxon>
        <taxon>Duplodnaviria</taxon>
        <taxon>Heunggongvirae</taxon>
        <taxon>Peploviricota</taxon>
        <taxon>Herviviricetes</taxon>
        <taxon>Herpesvirales</taxon>
        <taxon>Malacoherpesviridae</taxon>
        <taxon>Ostreavirus</taxon>
        <taxon>Ostreavirus ostreidmalaco1</taxon>
        <taxon>Ostreid herpesvirus 1</taxon>
    </lineage>
</organism>
<name>Y109_OSHVF</name>
<organismHost>
    <name type="scientific">Magallana gigas</name>
    <name type="common">Pacific oyster</name>
    <name type="synonym">Crassostrea gigas</name>
    <dbReference type="NCBI Taxonomy" id="29159"/>
</organismHost>
<organismHost>
    <name type="scientific">Pecten maximus</name>
    <name type="common">King scallop</name>
    <name type="synonym">Pilgrim's clam</name>
    <dbReference type="NCBI Taxonomy" id="6579"/>
</organismHost>
<feature type="chain" id="PRO_0000385123" description="Uncharacterized protein ORF109">
    <location>
        <begin position="1"/>
        <end position="874"/>
    </location>
</feature>
<reference key="1">
    <citation type="journal article" date="2005" name="J. Gen. Virol.">
        <title>A novel class of herpesvirus with bivalve hosts.</title>
        <authorList>
            <person name="Davison A.J."/>
            <person name="Trus B.L."/>
            <person name="Cheng N."/>
            <person name="Steven A.C."/>
            <person name="Watson M.S."/>
            <person name="Cunningham C."/>
            <person name="Le Deuff R.M."/>
            <person name="Renault T."/>
        </authorList>
    </citation>
    <scope>NUCLEOTIDE SEQUENCE [LARGE SCALE GENOMIC DNA]</scope>
</reference>
<proteinExistence type="predicted"/>
<dbReference type="EMBL" id="AY509253">
    <property type="protein sequence ID" value="AAS00994.1"/>
    <property type="molecule type" value="Genomic_DNA"/>
</dbReference>
<dbReference type="RefSeq" id="YP_024647.1">
    <property type="nucleotide sequence ID" value="NC_005881.2"/>
</dbReference>
<dbReference type="KEGG" id="vg:2948156"/>
<dbReference type="Proteomes" id="UP000007021">
    <property type="component" value="Segment"/>
</dbReference>
<dbReference type="GO" id="GO:0051276">
    <property type="term" value="P:chromosome organization"/>
    <property type="evidence" value="ECO:0007669"/>
    <property type="project" value="InterPro"/>
</dbReference>
<dbReference type="Gene3D" id="3.30.420.320">
    <property type="match status" value="1"/>
</dbReference>
<dbReference type="Gene3D" id="3.40.50.300">
    <property type="entry name" value="P-loop containing nucleotide triphosphate hydrolases"/>
    <property type="match status" value="1"/>
</dbReference>
<dbReference type="InterPro" id="IPR003498">
    <property type="entry name" value="DNA_pack_C"/>
</dbReference>
<dbReference type="InterPro" id="IPR038435">
    <property type="entry name" value="DNA_pack_C_sf"/>
</dbReference>
<dbReference type="InterPro" id="IPR003499">
    <property type="entry name" value="DNA_pack_N"/>
</dbReference>
<dbReference type="InterPro" id="IPR027417">
    <property type="entry name" value="P-loop_NTPase"/>
</dbReference>
<dbReference type="Pfam" id="PF02499">
    <property type="entry name" value="DNA_pack_C"/>
    <property type="match status" value="1"/>
</dbReference>
<dbReference type="Pfam" id="PF02500">
    <property type="entry name" value="DNA_pack_N"/>
    <property type="match status" value="1"/>
</dbReference>
<protein>
    <recommendedName>
        <fullName>Uncharacterized protein ORF109</fullName>
    </recommendedName>
</protein>
<gene>
    <name type="ORF">ORF109</name>
</gene>
<keyword id="KW-1185">Reference proteome</keyword>
<sequence>MSLVEEIERVGNIGLAESFIIDNKIVYGEIGDDIRSATFSPVIGYHTPSEMLDLVESRMYVGYHNPKHMKGIIARGPENLIEEERVKSAIKYAAETFDNKVYKVKHRTFDVMESKREKLDEFLNFIDMAMSGNWFKKLTMTVKSSGSPLKMSEKFYRLPFQQMLMLDVIVAMSARCDLGEYIGLILNYSKTILGLDNMSAEKINEIGERLKKNISGYIIPRRCGKSSFSGCMIALVMAMCPSAGIKCLYTAHKKNQCTDMYSSVEKHVVALIKEFNRINEAKFLELVNKYKARKKLYKGFYYKAAHTPGKKDGALVVSFYKFTEAGRNIKTTDIPMAVNEFRSIVYKQKDTHRGATYNLMFVDETNFLQPAIFNELFPMLNTDKAKMICTSSQKNGQDAKPFVDIRNTRQDGTTTCVVEYVCPNHCMSLIRQTNVAFTVCNCNIFSQPLHINAGAGVRKIMAAFSVKTNKNMEVDDDDDSKSTMLSEIGIMPPGLTKNDILGMNNLQNMRLTSELGRYHFLSKKSNVLKELLVEPDAYSKTVLLYLDPTPTSYRSVDSVTYDRSLHAISAIAQKKTGEYVVLGIEEFTTQKYEKESHDASKAMASIIMAQVTVIHKIYEHFNEFILIPEVNSFDLDNVWYNCGLLLREAVETTDMDDVSILAPCMITESENGTNGKAMFGKKRKIVSELEGKKVIEDPKTKKLRLEFDADGETNILDDYSDGMAKTLTELSTTFKELEHELKHSGKKYKIGYRMNGDKVGRFIDFFSNIFNRKKFTVAENLFSASLGATMEIELAEYLLEKLDNVVIRTDVNKRGKKSYSVSGKSSNKNQHCADDLAVSAVMATSLYNYYRDFKITPEEALIKLQPIYEQGSRL</sequence>
<accession>Q6R7C1</accession>